<accession>Q00721</accession>
<sequence length="315" mass="36451">MLKMESTQQMAVSIINSSFEAAVVAATSALENMGIEYDYQDIYSRVKNKFDFVMDDSGVKNNLIGKAITIDQALNNKFGSAIRNRNWLADTSRPAKLDEDVNKLRMMLSSKGIDQKMRVLNACFSVKRIPGKSSSIIKCTKLMRDKLERGEVEVDDSFVDEKMEVDTIDWKSRYEQLEQRFESLKSRVNEKYNNWVLKARKMNENMHSLQNVISQQQAHIAELQVYNNKLERDLQNKIGSLTSSIEWYLRSMELDPEIKADIEQQINSIDAINPLHAFDDLESVIRNLISDYDKLFLMFKGLIQRCNYQYSFGCE</sequence>
<comment type="function">
    <text evidence="1">Plays an important role in stimulating the translation of viral mRNAs. These mRNAs are capped but not polyadenylated, instead terminating in a conserved sequence 'GACC' at the 3' that is recognized by NSP3, which competes with host PABPC1 for EIF4G1 binding. The interaction between NSP3 and host EIF4G1 stabilizes the EIF4E-EIF4G1 interaction, thereby facilitating the initiation of capped mRNA translation.</text>
</comment>
<comment type="subunit">
    <text evidence="1">Homodimer. Interacts (via the coiled-coil region) with host ZC3H7B (via LD motif). Interacts with host EIF4G1.</text>
</comment>
<comment type="interaction">
    <interactant intactId="EBI-1263962">
        <id>Q00721</id>
    </interactant>
    <interactant intactId="EBI-948845">
        <id>Q9UGR2</id>
        <label>ZC3H7B</label>
    </interactant>
    <organismsDiffer>true</organismsDiffer>
    <experiments>6</experiments>
</comment>
<comment type="subcellular location">
    <subcellularLocation>
        <location evidence="1">Host cytoplasm</location>
    </subcellularLocation>
</comment>
<comment type="similarity">
    <text evidence="1">Belongs to the rotavirus NSP3 family.</text>
</comment>
<dbReference type="EMBL" id="M87502">
    <property type="protein sequence ID" value="AAA47295.1"/>
    <property type="molecule type" value="Genomic_RNA"/>
</dbReference>
<dbReference type="SMR" id="Q00721"/>
<dbReference type="IntAct" id="Q00721">
    <property type="interactions" value="2"/>
</dbReference>
<dbReference type="GO" id="GO:0030430">
    <property type="term" value="C:host cell cytoplasm"/>
    <property type="evidence" value="ECO:0007669"/>
    <property type="project" value="UniProtKB-SubCell"/>
</dbReference>
<dbReference type="GO" id="GO:0003723">
    <property type="term" value="F:RNA binding"/>
    <property type="evidence" value="ECO:0007669"/>
    <property type="project" value="UniProtKB-UniRule"/>
</dbReference>
<dbReference type="GO" id="GO:0006417">
    <property type="term" value="P:regulation of translation"/>
    <property type="evidence" value="ECO:0007669"/>
    <property type="project" value="UniProtKB-UniRule"/>
</dbReference>
<dbReference type="CDD" id="cd20714">
    <property type="entry name" value="NSP3_rotavirus"/>
    <property type="match status" value="1"/>
</dbReference>
<dbReference type="Gene3D" id="3.30.70.1610">
    <property type="match status" value="1"/>
</dbReference>
<dbReference type="Gene3D" id="1.20.5.970">
    <property type="entry name" value="Nonstructural RNA-binding protein"/>
    <property type="match status" value="1"/>
</dbReference>
<dbReference type="Gene3D" id="6.10.280.20">
    <property type="entry name" value="Rotavirus non-structural protein NSP3, N-terminal domain"/>
    <property type="match status" value="1"/>
</dbReference>
<dbReference type="HAMAP" id="MF_04094">
    <property type="entry name" value="ROTA_A_NSP3"/>
    <property type="match status" value="1"/>
</dbReference>
<dbReference type="HAMAP" id="MF_04090">
    <property type="entry name" value="ROTA_NSP3"/>
    <property type="match status" value="1"/>
</dbReference>
<dbReference type="InterPro" id="IPR042519">
    <property type="entry name" value="NSP3_N_rotavirus"/>
</dbReference>
<dbReference type="InterPro" id="IPR036082">
    <property type="entry name" value="NSP3_sf"/>
</dbReference>
<dbReference type="InterPro" id="IPR002873">
    <property type="entry name" value="Rotavirus_NSP3"/>
</dbReference>
<dbReference type="Pfam" id="PF01665">
    <property type="entry name" value="Rota_NSP3"/>
    <property type="match status" value="1"/>
</dbReference>
<dbReference type="SUPFAM" id="SSF69903">
    <property type="entry name" value="NSP3 homodimer"/>
    <property type="match status" value="1"/>
</dbReference>
<dbReference type="SUPFAM" id="SSF58030">
    <property type="entry name" value="Rotavirus nonstructural proteins"/>
    <property type="match status" value="1"/>
</dbReference>
<name>NSP3_ROTS4</name>
<proteinExistence type="evidence at protein level"/>
<organismHost>
    <name type="scientific">Macaca mulatta</name>
    <name type="common">Rhesus macaque</name>
    <dbReference type="NCBI Taxonomy" id="9544"/>
</organismHost>
<organism>
    <name type="scientific">Rotavirus A (strain RVA/SA11-4F/G3P6[1])</name>
    <name type="common">RV-A</name>
    <name type="synonym">Simian Agent 11 (strain 4F)</name>
    <dbReference type="NCBI Taxonomy" id="36436"/>
    <lineage>
        <taxon>Viruses</taxon>
        <taxon>Riboviria</taxon>
        <taxon>Orthornavirae</taxon>
        <taxon>Duplornaviricota</taxon>
        <taxon>Resentoviricetes</taxon>
        <taxon>Reovirales</taxon>
        <taxon>Sedoreoviridae</taxon>
        <taxon>Rotavirus</taxon>
        <taxon>Rotavirus A</taxon>
    </lineage>
</organism>
<feature type="chain" id="PRO_0000149542" description="Non-structural protein 3">
    <location>
        <begin position="1"/>
        <end position="315"/>
    </location>
</feature>
<feature type="region of interest" description="RNA-binding" evidence="1">
    <location>
        <begin position="1"/>
        <end position="149"/>
    </location>
</feature>
<feature type="region of interest" description="Dimerization" evidence="1">
    <location>
        <begin position="150"/>
        <end position="206"/>
    </location>
</feature>
<feature type="region of interest" description="Interaction with host ZC3H7B" evidence="1">
    <location>
        <begin position="170"/>
        <end position="234"/>
    </location>
</feature>
<feature type="region of interest" description="Interaction with host EIF4G1" evidence="1">
    <location>
        <begin position="208"/>
        <end position="315"/>
    </location>
</feature>
<feature type="coiled-coil region" evidence="1">
    <location>
        <begin position="166"/>
        <end position="237"/>
    </location>
</feature>
<protein>
    <recommendedName>
        <fullName evidence="1">Non-structural protein 3</fullName>
        <shortName evidence="1">NSP3</shortName>
    </recommendedName>
    <alternativeName>
        <fullName evidence="1">NCVP4</fullName>
    </alternativeName>
    <alternativeName>
        <fullName evidence="1">Non-structural RNA-binding protein 34</fullName>
        <shortName evidence="1">NS34</shortName>
    </alternativeName>
</protein>
<keyword id="KW-0175">Coiled coil</keyword>
<keyword id="KW-1035">Host cytoplasm</keyword>
<keyword id="KW-0945">Host-virus interaction</keyword>
<keyword id="KW-0694">RNA-binding</keyword>
<keyword id="KW-0810">Translation regulation</keyword>
<evidence type="ECO:0000255" key="1">
    <source>
        <dbReference type="HAMAP-Rule" id="MF_04094"/>
    </source>
</evidence>
<reference key="1">
    <citation type="journal article" date="1992" name="Virology">
        <title>Characterization of an oligomerization domain and RNA-binding properties on rotavirus nonstructural protein NS34.</title>
        <authorList>
            <person name="Mattion N.M."/>
            <person name="Cohen J."/>
            <person name="Aponte C."/>
            <person name="Estes M.K."/>
        </authorList>
    </citation>
    <scope>NUCLEOTIDE SEQUENCE [GENOMIC RNA]</scope>
</reference>